<accession>P68340</accession>
<accession>P36699</accession>
<dbReference type="EC" id="3.1.27.-"/>
<dbReference type="EMBL" id="Z86099">
    <property type="protein sequence ID" value="CAB06727.1"/>
    <property type="molecule type" value="Genomic_DNA"/>
</dbReference>
<dbReference type="RefSeq" id="YP_009137193.1">
    <property type="nucleotide sequence ID" value="NC_001798.2"/>
</dbReference>
<dbReference type="DNASU" id="1487328"/>
<dbReference type="GeneID" id="1487328"/>
<dbReference type="KEGG" id="vg:1487328"/>
<dbReference type="Proteomes" id="UP000001874">
    <property type="component" value="Segment"/>
</dbReference>
<dbReference type="GO" id="GO:0044423">
    <property type="term" value="C:virion component"/>
    <property type="evidence" value="ECO:0007669"/>
    <property type="project" value="UniProtKB-KW"/>
</dbReference>
<dbReference type="GO" id="GO:0004519">
    <property type="term" value="F:endonuclease activity"/>
    <property type="evidence" value="ECO:0007669"/>
    <property type="project" value="UniProtKB-KW"/>
</dbReference>
<dbReference type="GO" id="GO:0003723">
    <property type="term" value="F:RNA binding"/>
    <property type="evidence" value="ECO:0007669"/>
    <property type="project" value="UniProtKB-KW"/>
</dbReference>
<dbReference type="GO" id="GO:0039595">
    <property type="term" value="P:symbiont-mediated degradation of host mRNA"/>
    <property type="evidence" value="ECO:0007669"/>
    <property type="project" value="UniProtKB-KW"/>
</dbReference>
<dbReference type="GO" id="GO:0039657">
    <property type="term" value="P:symbiont-mediated suppression of host gene expression"/>
    <property type="evidence" value="ECO:0007669"/>
    <property type="project" value="UniProtKB-KW"/>
</dbReference>
<dbReference type="GO" id="GO:0052170">
    <property type="term" value="P:symbiont-mediated suppression of host innate immune response"/>
    <property type="evidence" value="ECO:0007669"/>
    <property type="project" value="UniProtKB-KW"/>
</dbReference>
<dbReference type="Gene3D" id="3.40.50.1010">
    <property type="entry name" value="5'-nuclease"/>
    <property type="match status" value="1"/>
</dbReference>
<dbReference type="InterPro" id="IPR029060">
    <property type="entry name" value="PIN-like_dom_sf"/>
</dbReference>
<dbReference type="InterPro" id="IPR006086">
    <property type="entry name" value="XPG-I_dom"/>
</dbReference>
<dbReference type="Pfam" id="PF00867">
    <property type="entry name" value="XPG_I"/>
    <property type="match status" value="1"/>
</dbReference>
<dbReference type="SUPFAM" id="SSF88723">
    <property type="entry name" value="PIN domain-like"/>
    <property type="match status" value="1"/>
</dbReference>
<protein>
    <recommendedName>
        <fullName>Virion host shutoff protein</fullName>
        <shortName>Vhs</shortName>
        <ecNumber>3.1.27.-</ecNumber>
    </recommendedName>
    <alternativeName>
        <fullName evidence="4">vhs endoribonuclease</fullName>
    </alternativeName>
</protein>
<organismHost>
    <name type="scientific">Homo sapiens</name>
    <name type="common">Human</name>
    <dbReference type="NCBI Taxonomy" id="9606"/>
</organismHost>
<proteinExistence type="evidence at protein level"/>
<name>SHUT_HHV2H</name>
<gene>
    <name type="primary">UL41</name>
</gene>
<organism>
    <name type="scientific">Human herpesvirus 2 (strain HG52)</name>
    <name type="common">HHV-2</name>
    <name type="synonym">Human herpes simplex virus 2</name>
    <dbReference type="NCBI Taxonomy" id="10315"/>
    <lineage>
        <taxon>Viruses</taxon>
        <taxon>Duplodnaviria</taxon>
        <taxon>Heunggongvirae</taxon>
        <taxon>Peploviricota</taxon>
        <taxon>Herviviricetes</taxon>
        <taxon>Herpesvirales</taxon>
        <taxon>Orthoherpesviridae</taxon>
        <taxon>Alphaherpesvirinae</taxon>
        <taxon>Simplexvirus</taxon>
        <taxon>Simplexvirus humanalpha2</taxon>
        <taxon>Human herpesvirus 2</taxon>
    </lineage>
</organism>
<comment type="function">
    <text evidence="1 3">Minor structural protein that acts as an endoribonuclease during lytic infection. Degrades host mRNAs in the cytoplasm by cutting them at preferred sites, including some in regions of translation initiation. Together with inhibition of host splicing by ICP27, contributes to an overall decrease in host protein synthesis. Also, after the onset of viral transcription, accelerates the turnover of viral mRNA, thereby facilitating the sequential expression of different classes of viral genes. Binds translation initiation factors eIF4H, eIF4AI, and eIF4AII, thereby may interact directly with the translation initiation complex and thus digest specifically mRNAs. Also impedes antigen presentation by major histocompatibility complex class I and class II molecules, inhibits secretion of cytokines that would otherwise recruit lymphocytes and neutrophils cells to the site of infection and blocks the activation of dendritic cells. Impedes the alpha/beta interferon-mediated response to infection (By similarity). Inhibits the integrated stress response (ISR) in the infected cell, this function requires the endonuclease activity (PubMed:27334584). Stress granule formation is thus inhibited, which allows protein synthesis and viral replication (PubMed:27334584).</text>
</comment>
<comment type="subunit">
    <text evidence="1">Interacts with human EIF4H, EIF4A1 and EIF4A2; interaction with eIF4AI and EIF4A2 presumably allows Vhs protein to associate with the eIF4F cap-binding complex.</text>
</comment>
<comment type="subcellular location">
    <subcellularLocation>
        <location evidence="4">Virion</location>
    </subcellularLocation>
</comment>
<comment type="similarity">
    <text evidence="5">Belongs to the herpesviridae VHS protein family.</text>
</comment>
<reference key="1">
    <citation type="journal article" date="1998" name="J. Virol.">
        <title>The genome sequence of herpes simplex virus type 2.</title>
        <authorList>
            <person name="Dolan A."/>
            <person name="Jamieson F.E."/>
            <person name="Cunningham C."/>
            <person name="Barnett B.C."/>
            <person name="McGeoch D.J."/>
        </authorList>
    </citation>
    <scope>NUCLEOTIDE SEQUENCE [LARGE SCALE GENOMIC DNA]</scope>
</reference>
<reference key="2">
    <citation type="journal article" date="2016" name="J. Virol.">
        <title>Herpes Simplex Virus 2 Virion Host Shutoff Endoribonuclease Activity Is Required To Disrupt Stress Granule Formation.</title>
        <authorList>
            <person name="Finnen R.L."/>
            <person name="Zhu M."/>
            <person name="Li J."/>
            <person name="Romo D."/>
            <person name="Banfield B.W."/>
        </authorList>
    </citation>
    <scope>FUNCTION</scope>
    <scope>MUTAGENESIS OF ASP-215</scope>
</reference>
<keyword id="KW-1132">Decay of host mRNAs by virus</keyword>
<keyword id="KW-0255">Endonuclease</keyword>
<keyword id="KW-1262">Eukaryotic host gene expression shutoff by virus</keyword>
<keyword id="KW-1190">Host gene expression shutoff by virus</keyword>
<keyword id="KW-1192">Host mRNA suppression by virus</keyword>
<keyword id="KW-0945">Host-virus interaction</keyword>
<keyword id="KW-0378">Hydrolase</keyword>
<keyword id="KW-1090">Inhibition of host innate immune response by virus</keyword>
<keyword id="KW-0922">Interferon antiviral system evasion</keyword>
<keyword id="KW-0426">Late protein</keyword>
<keyword id="KW-0540">Nuclease</keyword>
<keyword id="KW-1185">Reference proteome</keyword>
<keyword id="KW-0694">RNA-binding</keyword>
<keyword id="KW-0899">Viral immunoevasion</keyword>
<keyword id="KW-0946">Virion</keyword>
<sequence length="492" mass="55244">MGLFGMMKFAQTHHLVKRRGLRAPEGYFTPIAVDLWNVMYTLVVKYQRRYPSYDREAITLHCLCSMLRVFTQKSLFPIFVTDRGVECTEPVVFGAKAILARTTAQCRTDEEASDVDASPPPSPITDSRPSFAFSNMRRRGHAFAPGDRGTRAAGPGPAAPSGAPSKPALRLAHLFCIRVLRALGYAYINSGQLEADDACANLYHTNTVAYVHTTDTDLLLMGCDIVLDISTGYIPTIHCRDLLQYFKMSYPQFLALFVRCHTDLHPNNTYASVEDVLRECHWTAPSRSQARRAARRERANSRSLESMPTLTAAPVGLETRISWTEILAQQIAGEDDYEEDPPLQPPDVAGGPRDGARSSSSEILTPPELVQVPNAQRVAEHRGYVAGRRRHVIHDAPEALDWLPDPMTIAELVEHRYVKYVISLISPKERGPWTLLKRLPIYQDLRDEDLARSIVTRHITAPDIADRFLAQLWAHAPPPAFYKDVLAKFWDE</sequence>
<evidence type="ECO:0000250" key="1"/>
<evidence type="ECO:0000256" key="2">
    <source>
        <dbReference type="SAM" id="MobiDB-lite"/>
    </source>
</evidence>
<evidence type="ECO:0000269" key="3">
    <source>
    </source>
</evidence>
<evidence type="ECO:0000303" key="4">
    <source>
    </source>
</evidence>
<evidence type="ECO:0000305" key="5"/>
<feature type="chain" id="PRO_0000116056" description="Virion host shutoff protein">
    <location>
        <begin position="1"/>
        <end position="492"/>
    </location>
</feature>
<feature type="region of interest" description="Disordered" evidence="2">
    <location>
        <begin position="110"/>
        <end position="130"/>
    </location>
</feature>
<feature type="region of interest" description="Disordered" evidence="2">
    <location>
        <begin position="143"/>
        <end position="165"/>
    </location>
</feature>
<feature type="region of interest" description="Disordered" evidence="2">
    <location>
        <begin position="288"/>
        <end position="307"/>
    </location>
</feature>
<feature type="region of interest" description="Disordered" evidence="2">
    <location>
        <begin position="334"/>
        <end position="369"/>
    </location>
</feature>
<feature type="compositionally biased region" description="Low complexity" evidence="2">
    <location>
        <begin position="144"/>
        <end position="165"/>
    </location>
</feature>
<feature type="site" description="Necessary for the endonuclease activity" evidence="3">
    <location>
        <position position="215"/>
    </location>
</feature>
<feature type="mutagenesis site" description="Complete loss of endoribonuclease activity and of inhibition of stress granules formation." evidence="3">
    <original>D</original>
    <variation>N</variation>
    <location>
        <position position="215"/>
    </location>
</feature>